<proteinExistence type="evidence at protein level"/>
<accession>Q8R5L3</accession>
<accession>Q922I3</accession>
<dbReference type="EMBL" id="AF281050">
    <property type="protein sequence ID" value="AAL79766.1"/>
    <property type="molecule type" value="mRNA"/>
</dbReference>
<dbReference type="EMBL" id="AF281051">
    <property type="protein sequence ID" value="AAL79767.1"/>
    <property type="molecule type" value="mRNA"/>
</dbReference>
<dbReference type="EMBL" id="BC007479">
    <property type="protein sequence ID" value="AAH07479.1"/>
    <property type="molecule type" value="mRNA"/>
</dbReference>
<dbReference type="CCDS" id="CCDS16619.1">
    <molecule id="Q8R5L3-2"/>
</dbReference>
<dbReference type="CCDS" id="CCDS38210.1">
    <molecule id="Q8R5L3-1"/>
</dbReference>
<dbReference type="RefSeq" id="NP_671495.1">
    <molecule id="Q8R5L3-1"/>
    <property type="nucleotide sequence ID" value="NM_147153.4"/>
</dbReference>
<dbReference type="RefSeq" id="NP_849182.1">
    <molecule id="Q8R5L3-2"/>
    <property type="nucleotide sequence ID" value="NM_178851.4"/>
</dbReference>
<dbReference type="SMR" id="Q8R5L3"/>
<dbReference type="BioGRID" id="234638">
    <property type="interactions" value="6"/>
</dbReference>
<dbReference type="FunCoup" id="Q8R5L3">
    <property type="interactions" value="3557"/>
</dbReference>
<dbReference type="IntAct" id="Q8R5L3">
    <property type="interactions" value="4"/>
</dbReference>
<dbReference type="MINT" id="Q8R5L3"/>
<dbReference type="STRING" id="10090.ENSMUSP00000099559"/>
<dbReference type="iPTMnet" id="Q8R5L3"/>
<dbReference type="PhosphoSitePlus" id="Q8R5L3"/>
<dbReference type="PaxDb" id="10090-ENSMUSP00000099559"/>
<dbReference type="ProteomicsDB" id="297888">
    <molecule id="Q8R5L3-1"/>
</dbReference>
<dbReference type="ProteomicsDB" id="297889">
    <molecule id="Q8R5L3-2"/>
</dbReference>
<dbReference type="Pumba" id="Q8R5L3"/>
<dbReference type="Antibodypedia" id="23540">
    <property type="antibodies" value="96 antibodies from 25 providers"/>
</dbReference>
<dbReference type="DNASU" id="269338"/>
<dbReference type="Ensembl" id="ENSMUST00000028752.8">
    <molecule id="Q8R5L3-2"/>
    <property type="protein sequence ID" value="ENSMUSP00000028752.8"/>
    <property type="gene ID" value="ENSMUSG00000027291.16"/>
</dbReference>
<dbReference type="Ensembl" id="ENSMUST00000102501.10">
    <molecule id="Q8R5L3-1"/>
    <property type="protein sequence ID" value="ENSMUSP00000099559.4"/>
    <property type="gene ID" value="ENSMUSG00000027291.16"/>
</dbReference>
<dbReference type="GeneID" id="269338"/>
<dbReference type="KEGG" id="mmu:269338"/>
<dbReference type="UCSC" id="uc008lvj.2">
    <molecule id="Q8R5L3-1"/>
    <property type="organism name" value="mouse"/>
</dbReference>
<dbReference type="AGR" id="MGI:2443189"/>
<dbReference type="CTD" id="23339"/>
<dbReference type="MGI" id="MGI:2443189">
    <property type="gene designation" value="Vps39"/>
</dbReference>
<dbReference type="VEuPathDB" id="HostDB:ENSMUSG00000027291"/>
<dbReference type="eggNOG" id="KOG2063">
    <property type="taxonomic scope" value="Eukaryota"/>
</dbReference>
<dbReference type="GeneTree" id="ENSGT00530000063596"/>
<dbReference type="HOGENOM" id="CLU_004190_1_1_1"/>
<dbReference type="InParanoid" id="Q8R5L3"/>
<dbReference type="OMA" id="EEYCNQV"/>
<dbReference type="OrthoDB" id="5325112at2759"/>
<dbReference type="PhylomeDB" id="Q8R5L3"/>
<dbReference type="TreeFam" id="TF105803"/>
<dbReference type="BioGRID-ORCS" id="269338">
    <property type="hits" value="19 hits in 80 CRISPR screens"/>
</dbReference>
<dbReference type="CD-CODE" id="CE726F99">
    <property type="entry name" value="Postsynaptic density"/>
</dbReference>
<dbReference type="ChiTaRS" id="Bloc1s6">
    <property type="organism name" value="mouse"/>
</dbReference>
<dbReference type="PRO" id="PR:Q8R5L3"/>
<dbReference type="Proteomes" id="UP000000589">
    <property type="component" value="Chromosome 2"/>
</dbReference>
<dbReference type="RNAct" id="Q8R5L3">
    <property type="molecule type" value="protein"/>
</dbReference>
<dbReference type="Bgee" id="ENSMUSG00000027291">
    <property type="expression patterns" value="Expressed in embryonic brain and 247 other cell types or tissues"/>
</dbReference>
<dbReference type="ExpressionAtlas" id="Q8R5L3">
    <property type="expression patterns" value="baseline and differential"/>
</dbReference>
<dbReference type="GO" id="GO:0005770">
    <property type="term" value="C:late endosome"/>
    <property type="evidence" value="ECO:0000250"/>
    <property type="project" value="UniProtKB"/>
</dbReference>
<dbReference type="GO" id="GO:0031902">
    <property type="term" value="C:late endosome membrane"/>
    <property type="evidence" value="ECO:0007669"/>
    <property type="project" value="UniProtKB-SubCell"/>
</dbReference>
<dbReference type="GO" id="GO:1902501">
    <property type="term" value="C:lysosomal HOPS complex"/>
    <property type="evidence" value="ECO:0000250"/>
    <property type="project" value="UniProtKB"/>
</dbReference>
<dbReference type="GO" id="GO:0061909">
    <property type="term" value="P:autophagosome-lysosome fusion"/>
    <property type="evidence" value="ECO:0000250"/>
    <property type="project" value="UniProtKB"/>
</dbReference>
<dbReference type="GO" id="GO:0032456">
    <property type="term" value="P:endocytic recycling"/>
    <property type="evidence" value="ECO:0007669"/>
    <property type="project" value="Ensembl"/>
</dbReference>
<dbReference type="GO" id="GO:0034058">
    <property type="term" value="P:endosomal vesicle fusion"/>
    <property type="evidence" value="ECO:0007669"/>
    <property type="project" value="Ensembl"/>
</dbReference>
<dbReference type="GO" id="GO:0008333">
    <property type="term" value="P:endosome to lysosome transport"/>
    <property type="evidence" value="ECO:0007669"/>
    <property type="project" value="Ensembl"/>
</dbReference>
<dbReference type="GO" id="GO:0006886">
    <property type="term" value="P:intracellular protein transport"/>
    <property type="evidence" value="ECO:0007669"/>
    <property type="project" value="InterPro"/>
</dbReference>
<dbReference type="GO" id="GO:1902774">
    <property type="term" value="P:late endosome to lysosome transport"/>
    <property type="evidence" value="ECO:0007669"/>
    <property type="project" value="Ensembl"/>
</dbReference>
<dbReference type="InterPro" id="IPR000547">
    <property type="entry name" value="Clathrin_H-chain/VPS_repeat"/>
</dbReference>
<dbReference type="InterPro" id="IPR001180">
    <property type="entry name" value="CNH_dom"/>
</dbReference>
<dbReference type="InterPro" id="IPR032914">
    <property type="entry name" value="Vam6/VPS39/TRAP1"/>
</dbReference>
<dbReference type="InterPro" id="IPR019452">
    <property type="entry name" value="VPS39/TGF_beta_rcpt-assoc_1"/>
</dbReference>
<dbReference type="InterPro" id="IPR019453">
    <property type="entry name" value="VPS39/TGFA1_Znf"/>
</dbReference>
<dbReference type="PANTHER" id="PTHR12894">
    <property type="entry name" value="CNH DOMAIN CONTAINING"/>
    <property type="match status" value="1"/>
</dbReference>
<dbReference type="PANTHER" id="PTHR12894:SF49">
    <property type="entry name" value="VAM6_VPS39-LIKE PROTEIN"/>
    <property type="match status" value="1"/>
</dbReference>
<dbReference type="Pfam" id="PF00780">
    <property type="entry name" value="CNH"/>
    <property type="match status" value="1"/>
</dbReference>
<dbReference type="Pfam" id="PF10366">
    <property type="entry name" value="Vps39_1"/>
    <property type="match status" value="1"/>
</dbReference>
<dbReference type="Pfam" id="PF10367">
    <property type="entry name" value="zf-Vps39_C"/>
    <property type="match status" value="1"/>
</dbReference>
<dbReference type="SMART" id="SM00036">
    <property type="entry name" value="CNH"/>
    <property type="match status" value="1"/>
</dbReference>
<dbReference type="PROSITE" id="PS50236">
    <property type="entry name" value="CHCR"/>
    <property type="match status" value="1"/>
</dbReference>
<dbReference type="PROSITE" id="PS50219">
    <property type="entry name" value="CNH"/>
    <property type="match status" value="1"/>
</dbReference>
<comment type="function">
    <text evidence="1">Regulator of TGF-beta/activin signaling, inhibiting SMAD3- and activating SMAD2-dependent transcription. Acts by interfering with SMAD3/SMAD4 complex formation, this would lead to inhibition of SMAD3-dependent transcription and relieve SMAD3 inhibition of SMAD2-dependent promoters, thus increasing SMAD2-dependent transcription (By similarity).</text>
</comment>
<comment type="function">
    <text evidence="1">Plays a role in vesicle-mediated protein trafficking to lysosomal compartments including the endocytic membrane transport and autophagic pathways. Acts as a component of the HOPS endosomal tethering complex which is proposed to be involved in the Rab5-to-Rab7 endosome conversion probably implicating MON1A/B, and via binding SNAREs and SNARE complexes to mediate tethering and docking events during SNARE-mediated membrane fusion. The HOPS complex is proposed to be recruited to Rab7 on the late endosomal membrane and to regulate late endocytic, phagocytic and autophagic traffic towards lysosomes. Involved in homotypic vesicle fusions between late endosomes and in heterotypic fusions between late endosomes and lysosomes. Required for fusion of endosomes and autophagosomes with lysosomes (By similarity).</text>
</comment>
<comment type="subunit">
    <text evidence="1 4 5">Homooligomer (By similarity). Interacts with TGFBR2 and, less efficiently, with TGFBR1; interaction with TGFBR2 is independent of the receptor kinase activity and of the presence of TGF-beta. Also interacts with ACVR2B, but not with BMPR2. Interacts with SMAD4, preferentially following TGF-beta treatment (By similarity). Component of the putative homotypic fusion and vacuole protein sorting (HOPS) complex; the core of which composed of the class C Vps proteins VPS11, VPS16, VPS18 and VPS33A, is associated with VPS39 and VPS41. Interacts with PLEKHM2; involved in VPS39 recruitment to ARL8B-containing lysosomes (By similarity). Associates with adapter protein complex 3 (AP-3) and clathrin:AP-3 complexes (PubMed:21411634). Interacts with STX17; this interaction is increased in the absence of TMEM39A (By similarity). Interacts with RAB7, RAB2A and RAB2B (PubMed:28063257). Interacts with RAB2A (GTP-bound); the interaction contributes to obtaining a functional HOPS complex that promotes autophagosome-lysosome membrane fusion driven by STX17-SNAP29-VAMP8 (By similarity). Interacts with RAB39A (GTP-bound) and RAB39B (GTP-bound); interaction with RAB39A contributes to obtaining a functional HOPS complex (By similarity).</text>
</comment>
<comment type="subcellular location">
    <subcellularLocation>
        <location evidence="1">Cytoplasm</location>
    </subcellularLocation>
    <subcellularLocation>
        <location evidence="1">Lysosome membrane</location>
        <topology evidence="1">Peripheral membrane protein</topology>
    </subcellularLocation>
    <subcellularLocation>
        <location evidence="1">Late endosome membrane</location>
        <topology evidence="1">Peripheral membrane protein</topology>
    </subcellularLocation>
    <text evidence="1">Colocalizes with TGFBR1 and TGFBR2 in cytoplasmic vesicular structures and most prominently in cortical vesicles.</text>
</comment>
<comment type="alternative products">
    <event type="alternative splicing"/>
    <isoform>
        <id>Q8R5L3-1</id>
        <name>1</name>
        <sequence type="displayed"/>
    </isoform>
    <isoform>
        <id>Q8R5L3-2</id>
        <name>2</name>
        <sequence type="described" ref="VSP_004076"/>
    </isoform>
</comment>
<comment type="disruption phenotype">
    <text evidence="3">Embryonic lethal, before E6.5.</text>
</comment>
<comment type="similarity">
    <text evidence="8">Belongs to the VAM6/VPS39 family.</text>
</comment>
<keyword id="KW-0025">Alternative splicing</keyword>
<keyword id="KW-0072">Autophagy</keyword>
<keyword id="KW-0963">Cytoplasm</keyword>
<keyword id="KW-0967">Endosome</keyword>
<keyword id="KW-0458">Lysosome</keyword>
<keyword id="KW-0472">Membrane</keyword>
<keyword id="KW-0653">Protein transport</keyword>
<keyword id="KW-1185">Reference proteome</keyword>
<keyword id="KW-0813">Transport</keyword>
<gene>
    <name evidence="9" type="primary">Vps39</name>
    <name type="synonym">Pldn</name>
    <name type="synonym">Vam6</name>
</gene>
<sequence>MHDAFEPVPILEKLPLQIDCLAAWEEWLLVGTKQGHLLLYRIRKDVVPADVASPESGSCNRFEVTLEKSNKNFSKKIQQIHVVSQFKILVSLLENNIYVHDLLTFQQITTVSKAKGASLFTCDLQHTETGEEVLRMCVAVRKKLQLYFWKDREFHELQGDFSVPDVPKSMAWCENSICVGFKRDYYLIRVDGKGSIKELFPTGKQLEPLVAPLADGKVAVGQDDLTVVLNEEGICTQKCALNWTDIPVAMEHQPPYIVAVLPRYVEIRTLEPRLLVQSIELQRPRFITSGGSNIIYVASNHFVWRLIPVPMATQIQQLLQDKQFELALQLAEMKDDSDSEKQQQIHHIKNLYAFNLFCQKRFDESMQVFAKLGTDPTHVMGLYPDLLPTDYRKQLQYPNPLPTLSGAELEKAHLALIDYLTQKRSQLVKKLNDSDHQSSTSPLMEGTPTIKSKKKLLQIIDTTLLKCYLHTNVALVAPLLRLENNHCHIEESEHVLKKAHKYSELIILYEKKGLHEKALQVLVDQSKKANSPLKGHERTVQYLQHLGTENLHLIFSYSVWVLRDFPEDGLKIFTEDLPEVESLPRDRVLNFLIENFKALAIPYLEHIIHVWEETGSQFHNCLIQLYCEKVQSLMKDYLLSLPTGKSPVPAGEEGGELGEYRQKLLMFLEISSHYDPGRLICDFPFDGLLEERALLLGRMGKHEQALFIYVHVLKDTKMAKEYCHKHYDQNKEGNKDVYLSLLRMYLSPPSIHCLGPIKLELLEPQANLQAALQVLELHYSKLDTTKAINLLPANTQINDIRIFLEKVLEENAQKKRFNQVLKNLLHAEFLRVQEERILHQQVKCIITEEKVCMVCKKKIGNSAFARYPNGVVVHYFCSKEVNSADT</sequence>
<protein>
    <recommendedName>
        <fullName>Vam6/Vps39-like protein</fullName>
    </recommendedName>
</protein>
<organism>
    <name type="scientific">Mus musculus</name>
    <name type="common">Mouse</name>
    <dbReference type="NCBI Taxonomy" id="10090"/>
    <lineage>
        <taxon>Eukaryota</taxon>
        <taxon>Metazoa</taxon>
        <taxon>Chordata</taxon>
        <taxon>Craniata</taxon>
        <taxon>Vertebrata</taxon>
        <taxon>Euteleostomi</taxon>
        <taxon>Mammalia</taxon>
        <taxon>Eutheria</taxon>
        <taxon>Euarchontoglires</taxon>
        <taxon>Glires</taxon>
        <taxon>Rodentia</taxon>
        <taxon>Myomorpha</taxon>
        <taxon>Muroidea</taxon>
        <taxon>Muridae</taxon>
        <taxon>Murinae</taxon>
        <taxon>Mus</taxon>
        <taxon>Mus</taxon>
    </lineage>
</organism>
<evidence type="ECO:0000250" key="1">
    <source>
        <dbReference type="UniProtKB" id="Q96JC1"/>
    </source>
</evidence>
<evidence type="ECO:0000255" key="2">
    <source>
        <dbReference type="PROSITE-ProRule" id="PRU00795"/>
    </source>
</evidence>
<evidence type="ECO:0000269" key="3">
    <source>
    </source>
</evidence>
<evidence type="ECO:0000269" key="4">
    <source>
    </source>
</evidence>
<evidence type="ECO:0000269" key="5">
    <source>
    </source>
</evidence>
<evidence type="ECO:0000303" key="6">
    <source>
    </source>
</evidence>
<evidence type="ECO:0000303" key="7">
    <source ref="1"/>
</evidence>
<evidence type="ECO:0000305" key="8"/>
<evidence type="ECO:0000312" key="9">
    <source>
        <dbReference type="MGI" id="MGI:2443189"/>
    </source>
</evidence>
<feature type="chain" id="PRO_0000065902" description="Vam6/Vps39-like protein">
    <location>
        <begin position="1"/>
        <end position="886"/>
    </location>
</feature>
<feature type="domain" description="CNH" evidence="2">
    <location>
        <begin position="15"/>
        <end position="294"/>
    </location>
</feature>
<feature type="repeat" description="CHCR">
    <location>
        <begin position="573"/>
        <end position="750"/>
    </location>
</feature>
<feature type="splice variant" id="VSP_004076" description="In isoform 2." evidence="6 7">
    <original>VPADVASPESGS</original>
    <variation>G</variation>
    <location>
        <begin position="47"/>
        <end position="58"/>
    </location>
</feature>
<reference key="1">
    <citation type="submission" date="2000-06" db="EMBL/GenBank/DDBJ databases">
        <authorList>
            <person name="Falcon-Perez J.M."/>
            <person name="Dell'Angelica E.C."/>
        </authorList>
    </citation>
    <scope>NUCLEOTIDE SEQUENCE [MRNA] (ISOFORMS 1 AND 2)</scope>
    <source>
        <strain>Swiss Webster / NIH</strain>
    </source>
</reference>
<reference key="2">
    <citation type="journal article" date="2004" name="Genome Res.">
        <title>The status, quality, and expansion of the NIH full-length cDNA project: the Mammalian Gene Collection (MGC).</title>
        <authorList>
            <consortium name="The MGC Project Team"/>
        </authorList>
    </citation>
    <scope>NUCLEOTIDE SEQUENCE [LARGE SCALE MRNA] (ISOFORM 2)</scope>
    <source>
        <tissue>Mammary tumor</tissue>
    </source>
</reference>
<reference key="3">
    <citation type="journal article" date="2010" name="Cell">
        <title>A tissue-specific atlas of mouse protein phosphorylation and expression.</title>
        <authorList>
            <person name="Huttlin E.L."/>
            <person name="Jedrychowski M.P."/>
            <person name="Elias J.E."/>
            <person name="Goswami T."/>
            <person name="Rad R."/>
            <person name="Beausoleil S.A."/>
            <person name="Villen J."/>
            <person name="Haas W."/>
            <person name="Sowa M.E."/>
            <person name="Gygi S.P."/>
        </authorList>
    </citation>
    <scope>IDENTIFICATION BY MASS SPECTROMETRY [LARGE SCALE ANALYSIS]</scope>
    <source>
        <tissue>Brain</tissue>
        <tissue>Brown adipose tissue</tissue>
        <tissue>Kidney</tissue>
        <tissue>Lung</tissue>
        <tissue>Spleen</tissue>
        <tissue>Testis</tissue>
    </source>
</reference>
<reference key="4">
    <citation type="journal article" date="2011" name="Immunobiology">
        <title>The TGF-beta signaling modulators TRAP1/TGFBRAP1 and VPS39/Vam6/TLP are essential for early embryonic development.</title>
        <authorList>
            <person name="Messler S."/>
            <person name="Kropp S."/>
            <person name="Episkopou V."/>
            <person name="Felici A."/>
            <person name="Wurthner J."/>
            <person name="Lemke R."/>
            <person name="Jerabek-Willemsen M."/>
            <person name="Willecke R."/>
            <person name="Scheu S."/>
            <person name="Pfeffer K."/>
            <person name="Wurthner J.U."/>
        </authorList>
    </citation>
    <scope>DISRUPTION PHENOTYPE</scope>
</reference>
<reference key="5">
    <citation type="journal article" date="2011" name="Mol. Biol. Cell">
        <title>Clathrin-dependent mechanisms modulate the subcellular distribution of class C Vps/HOPS tether subunits in polarized and nonpolarized cells.</title>
        <authorList>
            <person name="Zlatic S.A."/>
            <person name="Tornieri K."/>
            <person name="L'Hernault S.W."/>
            <person name="Faundez V."/>
        </authorList>
    </citation>
    <scope>SUBUNIT</scope>
</reference>
<reference key="6">
    <citation type="journal article" date="2017" name="Elife">
        <title>Genetic screen in Drosophila muscle identifies autophagy-mediated T-tubule remodeling and a Rab2 role in autophagy.</title>
        <authorList>
            <person name="Fujita N."/>
            <person name="Huang W."/>
            <person name="Lin T.H."/>
            <person name="Groulx J.F."/>
            <person name="Jean S."/>
            <person name="Nguyen J."/>
            <person name="Kuchitsu Y."/>
            <person name="Koyama-Honda I."/>
            <person name="Mizushima N."/>
            <person name="Fukuda M."/>
            <person name="Kiger A.A."/>
        </authorList>
    </citation>
    <scope>INTERACTION WITH RAB7; RAB2A AND RAB2B</scope>
</reference>
<name>VPS39_MOUSE</name>